<name>ADIPL_XENTR</name>
<comment type="function">
    <text evidence="1">Insulin-sensitizing adipocyte-secreted protein (adipokine) that regulates glucose metabolism in liver and adipose tissue.</text>
</comment>
<comment type="subunit">
    <text evidence="1">Homomultimer; disulfide-linked.</text>
</comment>
<comment type="subcellular location">
    <subcellularLocation>
        <location evidence="1">Secreted</location>
    </subcellularLocation>
</comment>
<comment type="similarity">
    <text evidence="5">Belongs to the adipolin/erythroferrone family.</text>
</comment>
<feature type="signal peptide" evidence="2">
    <location>
        <begin position="1"/>
        <end position="24"/>
    </location>
</feature>
<feature type="chain" id="PRO_0000340249" description="Adipolin">
    <location>
        <begin position="25"/>
        <end position="324"/>
    </location>
</feature>
<feature type="domain" description="C1q" evidence="3">
    <location>
        <begin position="169"/>
        <end position="324"/>
    </location>
</feature>
<feature type="region of interest" description="Disordered" evidence="4">
    <location>
        <begin position="28"/>
        <end position="66"/>
    </location>
</feature>
<feature type="region of interest" description="Disordered" evidence="4">
    <location>
        <begin position="83"/>
        <end position="121"/>
    </location>
</feature>
<feature type="compositionally biased region" description="Polar residues" evidence="4">
    <location>
        <begin position="40"/>
        <end position="49"/>
    </location>
</feature>
<feature type="compositionally biased region" description="Basic and acidic residues" evidence="4">
    <location>
        <begin position="50"/>
        <end position="60"/>
    </location>
</feature>
<feature type="compositionally biased region" description="Basic residues" evidence="4">
    <location>
        <begin position="86"/>
        <end position="98"/>
    </location>
</feature>
<feature type="compositionally biased region" description="Pro residues" evidence="4">
    <location>
        <begin position="103"/>
        <end position="118"/>
    </location>
</feature>
<feature type="glycosylation site" description="N-linked (GlcNAc...) asparagine" evidence="2">
    <location>
        <position position="43"/>
    </location>
</feature>
<sequence length="324" mass="35757">MRCWVWLLVAIVLCQQLSVVRVLAAKKERKKGKDPHQFTEPFNVSLSNSEELHETDKLSETPDPGLPDAYTTWLGFVGRTDDGANSKKKCKGKDKKLRGLFGPPGPPGPQGPPGPPGMPGAEVTYEVLLQDFKQMLKEATERRLMSGDIPEHTSELPPIVLPVEDLSPYRRVDEGFHCRLKGQVIVDKKTLVELQNFQMPTAKGSFLRGSGLNLATGRFTASVPGIYQFSAHVHIDHSEIKSKAQLRPRDNVRVLICIESMCHRYTSLEVIAGLESNSKIFTVHVQGLLQLQVGQYTSIFVDNSAGAPITVQNGSDFMGILMGL</sequence>
<organism>
    <name type="scientific">Xenopus tropicalis</name>
    <name type="common">Western clawed frog</name>
    <name type="synonym">Silurana tropicalis</name>
    <dbReference type="NCBI Taxonomy" id="8364"/>
    <lineage>
        <taxon>Eukaryota</taxon>
        <taxon>Metazoa</taxon>
        <taxon>Chordata</taxon>
        <taxon>Craniata</taxon>
        <taxon>Vertebrata</taxon>
        <taxon>Euteleostomi</taxon>
        <taxon>Amphibia</taxon>
        <taxon>Batrachia</taxon>
        <taxon>Anura</taxon>
        <taxon>Pipoidea</taxon>
        <taxon>Pipidae</taxon>
        <taxon>Xenopodinae</taxon>
        <taxon>Xenopus</taxon>
        <taxon>Silurana</taxon>
    </lineage>
</organism>
<keyword id="KW-1015">Disulfide bond</keyword>
<keyword id="KW-0325">Glycoprotein</keyword>
<keyword id="KW-0372">Hormone</keyword>
<keyword id="KW-1185">Reference proteome</keyword>
<keyword id="KW-0964">Secreted</keyword>
<keyword id="KW-0732">Signal</keyword>
<dbReference type="EMBL" id="BC135357">
    <property type="protein sequence ID" value="AAI35358.1"/>
    <property type="molecule type" value="mRNA"/>
</dbReference>
<dbReference type="RefSeq" id="NP_001016365.2">
    <property type="nucleotide sequence ID" value="NM_001016365.3"/>
</dbReference>
<dbReference type="FunCoup" id="A4IH36">
    <property type="interactions" value="221"/>
</dbReference>
<dbReference type="STRING" id="8364.ENSXETP00000011169"/>
<dbReference type="GlyCosmos" id="A4IH36">
    <property type="glycosylation" value="1 site, No reported glycans"/>
</dbReference>
<dbReference type="DNASU" id="549119"/>
<dbReference type="GeneID" id="549119"/>
<dbReference type="KEGG" id="xtr:549119"/>
<dbReference type="AGR" id="Xenbase:XB-GENE-5726440"/>
<dbReference type="CTD" id="388581"/>
<dbReference type="Xenbase" id="XB-GENE-5726440">
    <property type="gene designation" value="c1qtnf12"/>
</dbReference>
<dbReference type="eggNOG" id="ENOG502QQVR">
    <property type="taxonomic scope" value="Eukaryota"/>
</dbReference>
<dbReference type="InParanoid" id="A4IH36"/>
<dbReference type="OMA" id="RCRGRDK"/>
<dbReference type="OrthoDB" id="6431870at2759"/>
<dbReference type="Proteomes" id="UP000008143">
    <property type="component" value="Chromosome 7"/>
</dbReference>
<dbReference type="Bgee" id="ENSXETG00000001035">
    <property type="expression patterns" value="Expressed in mesonephros and 1 other cell type or tissue"/>
</dbReference>
<dbReference type="ExpressionAtlas" id="A4IH36">
    <property type="expression patterns" value="baseline"/>
</dbReference>
<dbReference type="GO" id="GO:0005576">
    <property type="term" value="C:extracellular region"/>
    <property type="evidence" value="ECO:0000250"/>
    <property type="project" value="UniProtKB"/>
</dbReference>
<dbReference type="GO" id="GO:0005179">
    <property type="term" value="F:hormone activity"/>
    <property type="evidence" value="ECO:0000250"/>
    <property type="project" value="UniProtKB"/>
</dbReference>
<dbReference type="GO" id="GO:0046324">
    <property type="term" value="P:regulation of D-glucose import"/>
    <property type="evidence" value="ECO:0000250"/>
    <property type="project" value="UniProtKB"/>
</dbReference>
<dbReference type="FunFam" id="2.60.120.40:FF:000012">
    <property type="entry name" value="Adipolin isoform X1"/>
    <property type="match status" value="1"/>
</dbReference>
<dbReference type="Gene3D" id="2.60.120.40">
    <property type="match status" value="1"/>
</dbReference>
<dbReference type="Gene3D" id="1.20.5.320">
    <property type="entry name" value="6-Phosphogluconate Dehydrogenase, domain 3"/>
    <property type="match status" value="1"/>
</dbReference>
<dbReference type="InterPro" id="IPR052136">
    <property type="entry name" value="Adipolin/Erythroferrone-rel"/>
</dbReference>
<dbReference type="InterPro" id="IPR001073">
    <property type="entry name" value="C1q_dom"/>
</dbReference>
<dbReference type="InterPro" id="IPR008983">
    <property type="entry name" value="Tumour_necrosis_fac-like_dom"/>
</dbReference>
<dbReference type="PANTHER" id="PTHR24019">
    <property type="entry name" value="ADIPOLIN"/>
    <property type="match status" value="1"/>
</dbReference>
<dbReference type="PANTHER" id="PTHR24019:SF5">
    <property type="entry name" value="ADIPOLIN"/>
    <property type="match status" value="1"/>
</dbReference>
<dbReference type="Pfam" id="PF00386">
    <property type="entry name" value="C1q"/>
    <property type="match status" value="1"/>
</dbReference>
<dbReference type="SUPFAM" id="SSF49842">
    <property type="entry name" value="TNF-like"/>
    <property type="match status" value="1"/>
</dbReference>
<dbReference type="PROSITE" id="PS50871">
    <property type="entry name" value="C1Q"/>
    <property type="match status" value="1"/>
</dbReference>
<accession>A4IH36</accession>
<proteinExistence type="evidence at transcript level"/>
<protein>
    <recommendedName>
        <fullName>Adipolin</fullName>
    </recommendedName>
    <alternativeName>
        <fullName>Adipose-derived insulin-sensitizing factor</fullName>
    </alternativeName>
    <alternativeName>
        <fullName>Complement C1q tumor necrosis factor-related protein 12</fullName>
    </alternativeName>
</protein>
<reference key="1">
    <citation type="submission" date="2007-03" db="EMBL/GenBank/DDBJ databases">
        <authorList>
            <consortium name="NIH - Xenopus Gene Collection (XGC) project"/>
        </authorList>
    </citation>
    <scope>NUCLEOTIDE SEQUENCE [LARGE SCALE MRNA]</scope>
</reference>
<gene>
    <name type="primary">c1qtnf12</name>
    <name type="synonym">ctrp12</name>
    <name type="synonym">fam132a</name>
</gene>
<evidence type="ECO:0000250" key="1">
    <source>
        <dbReference type="UniProtKB" id="Q8R2Z0"/>
    </source>
</evidence>
<evidence type="ECO:0000255" key="2"/>
<evidence type="ECO:0000255" key="3">
    <source>
        <dbReference type="PROSITE-ProRule" id="PRU00368"/>
    </source>
</evidence>
<evidence type="ECO:0000256" key="4">
    <source>
        <dbReference type="SAM" id="MobiDB-lite"/>
    </source>
</evidence>
<evidence type="ECO:0000305" key="5"/>